<comment type="function">
    <text evidence="1">Catalyzes the oxidation of either pyridoxine 5'-phosphate (PNP) or pyridoxamine 5'-phosphate (PMP) into pyridoxal 5'-phosphate (PLP).</text>
</comment>
<comment type="catalytic activity">
    <reaction evidence="1">
        <text>pyridoxamine 5'-phosphate + O2 + H2O = pyridoxal 5'-phosphate + H2O2 + NH4(+)</text>
        <dbReference type="Rhea" id="RHEA:15817"/>
        <dbReference type="ChEBI" id="CHEBI:15377"/>
        <dbReference type="ChEBI" id="CHEBI:15379"/>
        <dbReference type="ChEBI" id="CHEBI:16240"/>
        <dbReference type="ChEBI" id="CHEBI:28938"/>
        <dbReference type="ChEBI" id="CHEBI:58451"/>
        <dbReference type="ChEBI" id="CHEBI:597326"/>
        <dbReference type="EC" id="1.4.3.5"/>
    </reaction>
</comment>
<comment type="catalytic activity">
    <reaction evidence="1">
        <text>pyridoxine 5'-phosphate + O2 = pyridoxal 5'-phosphate + H2O2</text>
        <dbReference type="Rhea" id="RHEA:15149"/>
        <dbReference type="ChEBI" id="CHEBI:15379"/>
        <dbReference type="ChEBI" id="CHEBI:16240"/>
        <dbReference type="ChEBI" id="CHEBI:58589"/>
        <dbReference type="ChEBI" id="CHEBI:597326"/>
        <dbReference type="EC" id="1.4.3.5"/>
    </reaction>
</comment>
<comment type="cofactor">
    <cofactor evidence="1">
        <name>FMN</name>
        <dbReference type="ChEBI" id="CHEBI:58210"/>
    </cofactor>
    <text evidence="1">Binds 1 FMN per subunit.</text>
</comment>
<comment type="pathway">
    <text evidence="1">Cofactor metabolism; pyridoxal 5'-phosphate salvage; pyridoxal 5'-phosphate from pyridoxamine 5'-phosphate: step 1/1.</text>
</comment>
<comment type="pathway">
    <text evidence="1">Cofactor metabolism; pyridoxal 5'-phosphate salvage; pyridoxal 5'-phosphate from pyridoxine 5'-phosphate: step 1/1.</text>
</comment>
<comment type="subunit">
    <text evidence="1">Homodimer.</text>
</comment>
<comment type="similarity">
    <text evidence="1">Belongs to the pyridoxamine 5'-phosphate oxidase family.</text>
</comment>
<reference key="1">
    <citation type="submission" date="2006-08" db="EMBL/GenBank/DDBJ databases">
        <title>Complete sequence of Maricaulis maris MCS10.</title>
        <authorList>
            <consortium name="US DOE Joint Genome Institute"/>
            <person name="Copeland A."/>
            <person name="Lucas S."/>
            <person name="Lapidus A."/>
            <person name="Barry K."/>
            <person name="Detter J.C."/>
            <person name="Glavina del Rio T."/>
            <person name="Hammon N."/>
            <person name="Israni S."/>
            <person name="Dalin E."/>
            <person name="Tice H."/>
            <person name="Pitluck S."/>
            <person name="Saunders E."/>
            <person name="Brettin T."/>
            <person name="Bruce D."/>
            <person name="Han C."/>
            <person name="Tapia R."/>
            <person name="Gilna P."/>
            <person name="Schmutz J."/>
            <person name="Larimer F."/>
            <person name="Land M."/>
            <person name="Hauser L."/>
            <person name="Kyrpides N."/>
            <person name="Mikhailova N."/>
            <person name="Viollier P."/>
            <person name="Stephens C."/>
            <person name="Richardson P."/>
        </authorList>
    </citation>
    <scope>NUCLEOTIDE SEQUENCE [LARGE SCALE GENOMIC DNA]</scope>
    <source>
        <strain>MCS10</strain>
    </source>
</reference>
<organism>
    <name type="scientific">Maricaulis maris (strain MCS10)</name>
    <name type="common">Caulobacter maris</name>
    <dbReference type="NCBI Taxonomy" id="394221"/>
    <lineage>
        <taxon>Bacteria</taxon>
        <taxon>Pseudomonadati</taxon>
        <taxon>Pseudomonadota</taxon>
        <taxon>Alphaproteobacteria</taxon>
        <taxon>Maricaulales</taxon>
        <taxon>Maricaulaceae</taxon>
        <taxon>Maricaulis</taxon>
    </lineage>
</organism>
<protein>
    <recommendedName>
        <fullName evidence="1">Pyridoxine/pyridoxamine 5'-phosphate oxidase</fullName>
        <ecNumber evidence="1">1.4.3.5</ecNumber>
    </recommendedName>
    <alternativeName>
        <fullName evidence="1">PNP/PMP oxidase</fullName>
        <shortName evidence="1">PNPOx</shortName>
    </alternativeName>
    <alternativeName>
        <fullName evidence="1">Pyridoxal 5'-phosphate synthase</fullName>
    </alternativeName>
</protein>
<sequence length="222" mass="24863">MSDDKLIPATPDADAYAKTADANAAEIFDRDEPFALFADWLTEAKKKEPNDANAMALATADASGLPDVRMVLLKDVDADGFVFYTNLESGKGGQLADNPQAALCFHWKSLRRQVRVRGAVEPVSAGEADAYFASRARDSRIGAWASKQSRPLESRFALEKSVAREAARFGLGEVPRPPHWSGFRIRPLSLEFWRDRPFRLHDRMFFDRPDLGSTWTVTRLYP</sequence>
<dbReference type="EC" id="1.4.3.5" evidence="1"/>
<dbReference type="EMBL" id="CP000449">
    <property type="protein sequence ID" value="ABI65150.1"/>
    <property type="molecule type" value="Genomic_DNA"/>
</dbReference>
<dbReference type="RefSeq" id="WP_011642797.1">
    <property type="nucleotide sequence ID" value="NC_008347.1"/>
</dbReference>
<dbReference type="SMR" id="Q0ARD7"/>
<dbReference type="STRING" id="394221.Mmar10_0857"/>
<dbReference type="KEGG" id="mmr:Mmar10_0857"/>
<dbReference type="eggNOG" id="COG0259">
    <property type="taxonomic scope" value="Bacteria"/>
</dbReference>
<dbReference type="HOGENOM" id="CLU_032263_2_2_5"/>
<dbReference type="OrthoDB" id="9780392at2"/>
<dbReference type="UniPathway" id="UPA01068">
    <property type="reaction ID" value="UER00304"/>
</dbReference>
<dbReference type="UniPathway" id="UPA01068">
    <property type="reaction ID" value="UER00305"/>
</dbReference>
<dbReference type="Proteomes" id="UP000001964">
    <property type="component" value="Chromosome"/>
</dbReference>
<dbReference type="GO" id="GO:0010181">
    <property type="term" value="F:FMN binding"/>
    <property type="evidence" value="ECO:0007669"/>
    <property type="project" value="UniProtKB-UniRule"/>
</dbReference>
<dbReference type="GO" id="GO:0004733">
    <property type="term" value="F:pyridoxamine phosphate oxidase activity"/>
    <property type="evidence" value="ECO:0007669"/>
    <property type="project" value="UniProtKB-UniRule"/>
</dbReference>
<dbReference type="GO" id="GO:0008615">
    <property type="term" value="P:pyridoxine biosynthetic process"/>
    <property type="evidence" value="ECO:0007669"/>
    <property type="project" value="UniProtKB-KW"/>
</dbReference>
<dbReference type="Gene3D" id="2.30.110.10">
    <property type="entry name" value="Electron Transport, Fmn-binding Protein, Chain A"/>
    <property type="match status" value="1"/>
</dbReference>
<dbReference type="HAMAP" id="MF_01629">
    <property type="entry name" value="PdxH"/>
    <property type="match status" value="1"/>
</dbReference>
<dbReference type="InterPro" id="IPR000659">
    <property type="entry name" value="Pyridox_Oxase"/>
</dbReference>
<dbReference type="InterPro" id="IPR019740">
    <property type="entry name" value="Pyridox_Oxase_CS"/>
</dbReference>
<dbReference type="InterPro" id="IPR011576">
    <property type="entry name" value="Pyridox_Oxase_N"/>
</dbReference>
<dbReference type="InterPro" id="IPR019576">
    <property type="entry name" value="Pyridoxamine_oxidase_dimer_C"/>
</dbReference>
<dbReference type="InterPro" id="IPR012349">
    <property type="entry name" value="Split_barrel_FMN-bd"/>
</dbReference>
<dbReference type="NCBIfam" id="TIGR00558">
    <property type="entry name" value="pdxH"/>
    <property type="match status" value="1"/>
</dbReference>
<dbReference type="NCBIfam" id="NF004231">
    <property type="entry name" value="PRK05679.1"/>
    <property type="match status" value="1"/>
</dbReference>
<dbReference type="PANTHER" id="PTHR10851:SF0">
    <property type="entry name" value="PYRIDOXINE-5'-PHOSPHATE OXIDASE"/>
    <property type="match status" value="1"/>
</dbReference>
<dbReference type="PANTHER" id="PTHR10851">
    <property type="entry name" value="PYRIDOXINE-5-PHOSPHATE OXIDASE"/>
    <property type="match status" value="1"/>
</dbReference>
<dbReference type="Pfam" id="PF10590">
    <property type="entry name" value="PNP_phzG_C"/>
    <property type="match status" value="1"/>
</dbReference>
<dbReference type="Pfam" id="PF01243">
    <property type="entry name" value="PNPOx_N"/>
    <property type="match status" value="1"/>
</dbReference>
<dbReference type="PIRSF" id="PIRSF000190">
    <property type="entry name" value="Pyd_amn-ph_oxd"/>
    <property type="match status" value="1"/>
</dbReference>
<dbReference type="SUPFAM" id="SSF50475">
    <property type="entry name" value="FMN-binding split barrel"/>
    <property type="match status" value="1"/>
</dbReference>
<dbReference type="PROSITE" id="PS01064">
    <property type="entry name" value="PYRIDOX_OXIDASE"/>
    <property type="match status" value="1"/>
</dbReference>
<gene>
    <name evidence="1" type="primary">pdxH</name>
    <name type="ordered locus">Mmar10_0857</name>
</gene>
<name>PDXH_MARMM</name>
<accession>Q0ARD7</accession>
<keyword id="KW-0285">Flavoprotein</keyword>
<keyword id="KW-0288">FMN</keyword>
<keyword id="KW-0560">Oxidoreductase</keyword>
<keyword id="KW-0664">Pyridoxine biosynthesis</keyword>
<keyword id="KW-1185">Reference proteome</keyword>
<proteinExistence type="inferred from homology"/>
<evidence type="ECO:0000255" key="1">
    <source>
        <dbReference type="HAMAP-Rule" id="MF_01629"/>
    </source>
</evidence>
<feature type="chain" id="PRO_0000292301" description="Pyridoxine/pyridoxamine 5'-phosphate oxidase">
    <location>
        <begin position="1"/>
        <end position="222"/>
    </location>
</feature>
<feature type="binding site" evidence="1">
    <location>
        <begin position="69"/>
        <end position="74"/>
    </location>
    <ligand>
        <name>FMN</name>
        <dbReference type="ChEBI" id="CHEBI:58210"/>
    </ligand>
</feature>
<feature type="binding site" evidence="1">
    <location>
        <position position="74"/>
    </location>
    <ligand>
        <name>substrate</name>
    </ligand>
</feature>
<feature type="binding site" evidence="1">
    <location>
        <begin position="84"/>
        <end position="85"/>
    </location>
    <ligand>
        <name>FMN</name>
        <dbReference type="ChEBI" id="CHEBI:58210"/>
    </ligand>
</feature>
<feature type="binding site" evidence="1">
    <location>
        <position position="91"/>
    </location>
    <ligand>
        <name>FMN</name>
        <dbReference type="ChEBI" id="CHEBI:58210"/>
    </ligand>
</feature>
<feature type="binding site" evidence="1">
    <location>
        <position position="113"/>
    </location>
    <ligand>
        <name>FMN</name>
        <dbReference type="ChEBI" id="CHEBI:58210"/>
    </ligand>
</feature>
<feature type="binding site" evidence="1">
    <location>
        <position position="131"/>
    </location>
    <ligand>
        <name>substrate</name>
    </ligand>
</feature>
<feature type="binding site" evidence="1">
    <location>
        <position position="135"/>
    </location>
    <ligand>
        <name>substrate</name>
    </ligand>
</feature>
<feature type="binding site" evidence="1">
    <location>
        <position position="139"/>
    </location>
    <ligand>
        <name>substrate</name>
    </ligand>
</feature>
<feature type="binding site" evidence="1">
    <location>
        <begin position="148"/>
        <end position="149"/>
    </location>
    <ligand>
        <name>FMN</name>
        <dbReference type="ChEBI" id="CHEBI:58210"/>
    </ligand>
</feature>
<feature type="binding site" evidence="1">
    <location>
        <position position="193"/>
    </location>
    <ligand>
        <name>FMN</name>
        <dbReference type="ChEBI" id="CHEBI:58210"/>
    </ligand>
</feature>
<feature type="binding site" evidence="1">
    <location>
        <begin position="199"/>
        <end position="201"/>
    </location>
    <ligand>
        <name>substrate</name>
    </ligand>
</feature>
<feature type="binding site" evidence="1">
    <location>
        <position position="203"/>
    </location>
    <ligand>
        <name>FMN</name>
        <dbReference type="ChEBI" id="CHEBI:58210"/>
    </ligand>
</feature>